<name>HPRK_MYCPU</name>
<dbReference type="EC" id="2.7.11.-"/>
<dbReference type="EC" id="2.7.4.-"/>
<dbReference type="EMBL" id="AL445565">
    <property type="protein sequence ID" value="CAC13884.1"/>
    <property type="molecule type" value="Genomic_DNA"/>
</dbReference>
<dbReference type="PIR" id="G90600">
    <property type="entry name" value="G90600"/>
</dbReference>
<dbReference type="RefSeq" id="WP_010925512.1">
    <property type="nucleotide sequence ID" value="NC_002771.1"/>
</dbReference>
<dbReference type="SMR" id="Q98PL1"/>
<dbReference type="STRING" id="272635.gene:17577322"/>
<dbReference type="KEGG" id="mpu:MYPU_7110"/>
<dbReference type="eggNOG" id="COG1493">
    <property type="taxonomic scope" value="Bacteria"/>
</dbReference>
<dbReference type="HOGENOM" id="CLU_052030_0_1_14"/>
<dbReference type="BioCyc" id="MPUL272635:G1GT6-724-MONOMER"/>
<dbReference type="Proteomes" id="UP000000528">
    <property type="component" value="Chromosome"/>
</dbReference>
<dbReference type="GO" id="GO:0005524">
    <property type="term" value="F:ATP binding"/>
    <property type="evidence" value="ECO:0007669"/>
    <property type="project" value="UniProtKB-UniRule"/>
</dbReference>
<dbReference type="GO" id="GO:0000287">
    <property type="term" value="F:magnesium ion binding"/>
    <property type="evidence" value="ECO:0007669"/>
    <property type="project" value="UniProtKB-UniRule"/>
</dbReference>
<dbReference type="GO" id="GO:0000155">
    <property type="term" value="F:phosphorelay sensor kinase activity"/>
    <property type="evidence" value="ECO:0007669"/>
    <property type="project" value="InterPro"/>
</dbReference>
<dbReference type="GO" id="GO:0004674">
    <property type="term" value="F:protein serine/threonine kinase activity"/>
    <property type="evidence" value="ECO:0007669"/>
    <property type="project" value="UniProtKB-KW"/>
</dbReference>
<dbReference type="GO" id="GO:0004712">
    <property type="term" value="F:protein serine/threonine/tyrosine kinase activity"/>
    <property type="evidence" value="ECO:0007669"/>
    <property type="project" value="UniProtKB-UniRule"/>
</dbReference>
<dbReference type="GO" id="GO:0006109">
    <property type="term" value="P:regulation of carbohydrate metabolic process"/>
    <property type="evidence" value="ECO:0007669"/>
    <property type="project" value="UniProtKB-UniRule"/>
</dbReference>
<dbReference type="CDD" id="cd01918">
    <property type="entry name" value="HprK_C"/>
    <property type="match status" value="1"/>
</dbReference>
<dbReference type="Gene3D" id="3.40.1390.20">
    <property type="entry name" value="HprK N-terminal domain-like"/>
    <property type="match status" value="1"/>
</dbReference>
<dbReference type="Gene3D" id="3.40.50.300">
    <property type="entry name" value="P-loop containing nucleotide triphosphate hydrolases"/>
    <property type="match status" value="1"/>
</dbReference>
<dbReference type="HAMAP" id="MF_01249">
    <property type="entry name" value="HPr_kinase"/>
    <property type="match status" value="1"/>
</dbReference>
<dbReference type="InterPro" id="IPR003755">
    <property type="entry name" value="HPr(Ser)_kin/Pase"/>
</dbReference>
<dbReference type="InterPro" id="IPR011104">
    <property type="entry name" value="Hpr_kin/Pase_C"/>
</dbReference>
<dbReference type="InterPro" id="IPR011126">
    <property type="entry name" value="Hpr_kin/Pase_Hpr_N"/>
</dbReference>
<dbReference type="InterPro" id="IPR027417">
    <property type="entry name" value="P-loop_NTPase"/>
</dbReference>
<dbReference type="InterPro" id="IPR028979">
    <property type="entry name" value="Ser_kin/Pase_Hpr-like_N_sf"/>
</dbReference>
<dbReference type="NCBIfam" id="TIGR00679">
    <property type="entry name" value="hpr-ser"/>
    <property type="match status" value="1"/>
</dbReference>
<dbReference type="PANTHER" id="PTHR30305:SF1">
    <property type="entry name" value="HPR KINASE_PHOSPHORYLASE"/>
    <property type="match status" value="1"/>
</dbReference>
<dbReference type="PANTHER" id="PTHR30305">
    <property type="entry name" value="PROTEIN YJDM-RELATED"/>
    <property type="match status" value="1"/>
</dbReference>
<dbReference type="Pfam" id="PF07475">
    <property type="entry name" value="Hpr_kinase_C"/>
    <property type="match status" value="1"/>
</dbReference>
<dbReference type="Pfam" id="PF02603">
    <property type="entry name" value="Hpr_kinase_N"/>
    <property type="match status" value="1"/>
</dbReference>
<dbReference type="SUPFAM" id="SSF75138">
    <property type="entry name" value="HprK N-terminal domain-like"/>
    <property type="match status" value="1"/>
</dbReference>
<dbReference type="SUPFAM" id="SSF53795">
    <property type="entry name" value="PEP carboxykinase-like"/>
    <property type="match status" value="1"/>
</dbReference>
<evidence type="ECO:0000250" key="1"/>
<evidence type="ECO:0000255" key="2"/>
<evidence type="ECO:0000305" key="3"/>
<reference key="1">
    <citation type="journal article" date="2001" name="Nucleic Acids Res.">
        <title>The complete genome sequence of the murine respiratory pathogen Mycoplasma pulmonis.</title>
        <authorList>
            <person name="Chambaud I."/>
            <person name="Heilig R."/>
            <person name="Ferris S."/>
            <person name="Barbe V."/>
            <person name="Samson D."/>
            <person name="Galisson F."/>
            <person name="Moszer I."/>
            <person name="Dybvig K."/>
            <person name="Wroblewski H."/>
            <person name="Viari A."/>
            <person name="Rocha E.P.C."/>
            <person name="Blanchard A."/>
        </authorList>
    </citation>
    <scope>NUCLEOTIDE SEQUENCE [LARGE SCALE GENOMIC DNA]</scope>
    <source>
        <strain>UAB CTIP</strain>
    </source>
</reference>
<protein>
    <recommendedName>
        <fullName>HPr kinase/phosphorylase</fullName>
        <shortName>HPrK/P</shortName>
        <ecNumber>2.7.11.-</ecNumber>
        <ecNumber>2.7.4.-</ecNumber>
    </recommendedName>
    <alternativeName>
        <fullName>HPr(Ser) kinase/phosphorylase</fullName>
    </alternativeName>
</protein>
<accession>Q98PL1</accession>
<comment type="function">
    <text evidence="1">Catalyzes the ATP- as well as the pyrophosphate-dependent phosphorylation of a specific serine residue in HPr, a phosphocarrier protein of the phosphoenolpyruvate-dependent sugar phosphotransferase system (PTS). HprK/P also catalyzes the pyrophosphate-producing, inorganic phosphate-dependent dephosphorylation (phosphorolysis) of seryl-phosphorylated HPr (P-Ser-HPr) (By similarity).</text>
</comment>
<comment type="catalytic activity">
    <reaction>
        <text>[HPr protein]-L-serine + ATP = [HPr protein]-O-phospho-L-serine + ADP + H(+)</text>
        <dbReference type="Rhea" id="RHEA:46600"/>
        <dbReference type="Rhea" id="RHEA-COMP:11602"/>
        <dbReference type="Rhea" id="RHEA-COMP:11603"/>
        <dbReference type="ChEBI" id="CHEBI:15378"/>
        <dbReference type="ChEBI" id="CHEBI:29999"/>
        <dbReference type="ChEBI" id="CHEBI:30616"/>
        <dbReference type="ChEBI" id="CHEBI:83421"/>
        <dbReference type="ChEBI" id="CHEBI:456216"/>
    </reaction>
</comment>
<comment type="catalytic activity">
    <reaction>
        <text>[HPr protein]-O-phospho-L-serine + phosphate + H(+) = [HPr protein]-L-serine + diphosphate</text>
        <dbReference type="Rhea" id="RHEA:46604"/>
        <dbReference type="Rhea" id="RHEA-COMP:11602"/>
        <dbReference type="Rhea" id="RHEA-COMP:11603"/>
        <dbReference type="ChEBI" id="CHEBI:15378"/>
        <dbReference type="ChEBI" id="CHEBI:29999"/>
        <dbReference type="ChEBI" id="CHEBI:33019"/>
        <dbReference type="ChEBI" id="CHEBI:43474"/>
        <dbReference type="ChEBI" id="CHEBI:83421"/>
    </reaction>
</comment>
<comment type="cofactor">
    <cofactor evidence="1">
        <name>Mg(2+)</name>
        <dbReference type="ChEBI" id="CHEBI:18420"/>
    </cofactor>
</comment>
<comment type="subunit">
    <text evidence="1">Homohexamer.</text>
</comment>
<comment type="domain">
    <text evidence="1">The Walker A ATP-binding motif also binds Pi and PPi.</text>
</comment>
<comment type="miscellaneous">
    <text evidence="1">Both phosphorylation and phosphorolysis are carried out by the same active site and suggest a common mechanism for both reactions.</text>
</comment>
<comment type="similarity">
    <text evidence="3">Belongs to the HPrK/P family.</text>
</comment>
<keyword id="KW-0067">ATP-binding</keyword>
<keyword id="KW-0119">Carbohydrate metabolism</keyword>
<keyword id="KW-0418">Kinase</keyword>
<keyword id="KW-0460">Magnesium</keyword>
<keyword id="KW-0479">Metal-binding</keyword>
<keyword id="KW-0511">Multifunctional enzyme</keyword>
<keyword id="KW-0547">Nucleotide-binding</keyword>
<keyword id="KW-1185">Reference proteome</keyword>
<keyword id="KW-0723">Serine/threonine-protein kinase</keyword>
<keyword id="KW-0808">Transferase</keyword>
<proteinExistence type="inferred from homology"/>
<sequence>MKKKLFVSELIKHFDLEVLNHDFPEIEDREILTPSIKRLGLELSGHFIYDAISGVIVGWGTNESKFFEKIGSEKAKSSIEEIFSRKIPMLVLSKGFDKNYYSTIIEIANKHKTPVIFYKASLSEINTILGIYLLQYFAKKVQVHGTLVSVFGMGILIVGDSGLGKSEAALELVQKGHVLISDDAVLVSHYGNKYFGKAPYITKNLIEVRGLGLIDILSVHGLKSVLPECEINFVVELKDYEQNKSNFDRLGNKVLKYQIGEWKIPKIEIPIRQGRSVASLIEASANMFLSKLNGHDVLAMIQERSLNDE</sequence>
<feature type="chain" id="PRO_0000058974" description="HPr kinase/phosphorylase">
    <location>
        <begin position="1"/>
        <end position="309"/>
    </location>
</feature>
<feature type="region of interest" description="Important for the catalytic mechanism of both phosphorylation and dephosphorylation" evidence="1">
    <location>
        <begin position="206"/>
        <end position="215"/>
    </location>
</feature>
<feature type="region of interest" description="Important for the catalytic mechanism of dephosphorylation" evidence="1">
    <location>
        <begin position="270"/>
        <end position="275"/>
    </location>
</feature>
<feature type="active site" evidence="1">
    <location>
        <position position="144"/>
    </location>
</feature>
<feature type="active site" evidence="1">
    <location>
        <position position="165"/>
    </location>
</feature>
<feature type="active site" description="Proton acceptor; for phosphorylation activity. Proton donor; for dephosphorylation activity" evidence="1">
    <location>
        <position position="183"/>
    </location>
</feature>
<feature type="active site" evidence="1">
    <location>
        <position position="249"/>
    </location>
</feature>
<feature type="binding site" evidence="1">
    <location>
        <begin position="159"/>
        <end position="166"/>
    </location>
    <ligand>
        <name>ATP</name>
        <dbReference type="ChEBI" id="CHEBI:30616"/>
    </ligand>
</feature>
<feature type="binding site" evidence="2">
    <location>
        <position position="166"/>
    </location>
    <ligand>
        <name>Mg(2+)</name>
        <dbReference type="ChEBI" id="CHEBI:18420"/>
    </ligand>
</feature>
<feature type="binding site" evidence="2">
    <location>
        <position position="207"/>
    </location>
    <ligand>
        <name>Mg(2+)</name>
        <dbReference type="ChEBI" id="CHEBI:18420"/>
    </ligand>
</feature>
<organism>
    <name type="scientific">Mycoplasmopsis pulmonis (strain UAB CTIP)</name>
    <name type="common">Mycoplasma pulmonis</name>
    <dbReference type="NCBI Taxonomy" id="272635"/>
    <lineage>
        <taxon>Bacteria</taxon>
        <taxon>Bacillati</taxon>
        <taxon>Mycoplasmatota</taxon>
        <taxon>Mycoplasmoidales</taxon>
        <taxon>Metamycoplasmataceae</taxon>
        <taxon>Mycoplasmopsis</taxon>
    </lineage>
</organism>
<gene>
    <name type="primary">hprK</name>
    <name type="ordered locus">MYPU_7110</name>
</gene>